<keyword id="KW-0007">Acetylation</keyword>
<keyword id="KW-0067">ATP-binding</keyword>
<keyword id="KW-0436">Ligase</keyword>
<keyword id="KW-0460">Magnesium</keyword>
<keyword id="KW-0479">Metal-binding</keyword>
<keyword id="KW-0547">Nucleotide-binding</keyword>
<keyword id="KW-1185">Reference proteome</keyword>
<reference key="1">
    <citation type="journal article" date="2002" name="Proc. Natl. Acad. Sci. U.S.A.">
        <title>The complete genome sequence of Chlorobium tepidum TLS, a photosynthetic, anaerobic, green-sulfur bacterium.</title>
        <authorList>
            <person name="Eisen J.A."/>
            <person name="Nelson K.E."/>
            <person name="Paulsen I.T."/>
            <person name="Heidelberg J.F."/>
            <person name="Wu M."/>
            <person name="Dodson R.J."/>
            <person name="DeBoy R.T."/>
            <person name="Gwinn M.L."/>
            <person name="Nelson W.C."/>
            <person name="Haft D.H."/>
            <person name="Hickey E.K."/>
            <person name="Peterson J.D."/>
            <person name="Durkin A.S."/>
            <person name="Kolonay J.F."/>
            <person name="Yang F."/>
            <person name="Holt I.E."/>
            <person name="Umayam L.A."/>
            <person name="Mason T.M."/>
            <person name="Brenner M."/>
            <person name="Shea T.P."/>
            <person name="Parksey D.S."/>
            <person name="Nierman W.C."/>
            <person name="Feldblyum T.V."/>
            <person name="Hansen C.L."/>
            <person name="Craven M.B."/>
            <person name="Radune D."/>
            <person name="Vamathevan J.J."/>
            <person name="Khouri H.M."/>
            <person name="White O."/>
            <person name="Gruber T.M."/>
            <person name="Ketchum K.A."/>
            <person name="Venter J.C."/>
            <person name="Tettelin H."/>
            <person name="Bryant D.A."/>
            <person name="Fraser C.M."/>
        </authorList>
    </citation>
    <scope>NUCLEOTIDE SEQUENCE [LARGE SCALE GENOMIC DNA]</scope>
    <source>
        <strain>ATCC 49652 / DSM 12025 / NBRC 103806 / TLS</strain>
    </source>
</reference>
<sequence length="659" mass="73576">MATEQTKGQSSESISSVLSERRKFPPPEAFSSQSHISSMEQYEKLYADAAADPDKYWGDLAEQFHWFKKWDSVLEWNAPYAKWFNGGTTNIAYNCLDVHVGSWRKNKAAIIWEGEEGNERILTYGELHRQVSKFANVLKIAGIKPGDKVAIYMGMVPELVIAVLACARVGAVHNVIFAGFAAHAITERVNDSRAKIVICADGTRRRGSTINLKNIVDEAIINTPSVKNVIVLKVTGEEIHMHDGMDHWWHDLMGLAVDECEPAQVDSEHPLFLLYTSGSTGKPKGILHTTAGYMVHAASSFKYVFDIKDEDIYFCTADIGWITGHTYIIYGPLLNGATVFMYEGAPNYPQWDRFWDIINRHKITILYTAPTAIRAFIRAGNEWVTKHDLSSLRLLGTVGEPINPEAWMWYHKYVGQEKCPIVDTWWQTETGGIMISPMPGATPTKPGTATRPLPGIMVDVVRKDGTPCNANEGGYLVVKRPWPSMLRTIYGDNERYEKTYWSEFPGMYFTGDGARKDDDGYIWIMGRVDDVVNVSGHRLGTSEVESALVSHEAVAEAAVVSRPDEIKGNALVAFVTLKDGYEGDAKLRDSLGKHVAKEIGAIAKPDEIRWAKGLPKTRSGKIMRRLLRELATSNEIKGDVTTLEDLGVIENLREQEDEG</sequence>
<name>ACSA_CHLTE</name>
<organism>
    <name type="scientific">Chlorobaculum tepidum (strain ATCC 49652 / DSM 12025 / NBRC 103806 / TLS)</name>
    <name type="common">Chlorobium tepidum</name>
    <dbReference type="NCBI Taxonomy" id="194439"/>
    <lineage>
        <taxon>Bacteria</taxon>
        <taxon>Pseudomonadati</taxon>
        <taxon>Chlorobiota</taxon>
        <taxon>Chlorobiia</taxon>
        <taxon>Chlorobiales</taxon>
        <taxon>Chlorobiaceae</taxon>
        <taxon>Chlorobaculum</taxon>
    </lineage>
</organism>
<evidence type="ECO:0000255" key="1">
    <source>
        <dbReference type="HAMAP-Rule" id="MF_01123"/>
    </source>
</evidence>
<evidence type="ECO:0000256" key="2">
    <source>
        <dbReference type="SAM" id="MobiDB-lite"/>
    </source>
</evidence>
<protein>
    <recommendedName>
        <fullName evidence="1">Acetyl-coenzyme A synthetase</fullName>
        <shortName evidence="1">AcCoA synthetase</shortName>
        <shortName evidence="1">Acs</shortName>
        <ecNumber evidence="1">6.2.1.1</ecNumber>
    </recommendedName>
    <alternativeName>
        <fullName evidence="1">Acetate--CoA ligase</fullName>
    </alternativeName>
    <alternativeName>
        <fullName evidence="1">Acyl-activating enzyme</fullName>
    </alternativeName>
</protein>
<accession>Q8KBY0</accession>
<feature type="chain" id="PRO_0000208360" description="Acetyl-coenzyme A synthetase">
    <location>
        <begin position="1"/>
        <end position="659"/>
    </location>
</feature>
<feature type="region of interest" description="Disordered" evidence="2">
    <location>
        <begin position="1"/>
        <end position="35"/>
    </location>
</feature>
<feature type="binding site" evidence="1">
    <location>
        <begin position="205"/>
        <end position="208"/>
    </location>
    <ligand>
        <name>CoA</name>
        <dbReference type="ChEBI" id="CHEBI:57287"/>
    </ligand>
</feature>
<feature type="binding site" evidence="1">
    <location>
        <position position="323"/>
    </location>
    <ligand>
        <name>CoA</name>
        <dbReference type="ChEBI" id="CHEBI:57287"/>
    </ligand>
</feature>
<feature type="binding site" evidence="1">
    <location>
        <position position="347"/>
    </location>
    <ligand>
        <name>CoA</name>
        <dbReference type="ChEBI" id="CHEBI:57287"/>
    </ligand>
</feature>
<feature type="binding site" evidence="1">
    <location>
        <begin position="399"/>
        <end position="401"/>
    </location>
    <ligand>
        <name>ATP</name>
        <dbReference type="ChEBI" id="CHEBI:30616"/>
    </ligand>
</feature>
<feature type="binding site" evidence="1">
    <location>
        <begin position="423"/>
        <end position="428"/>
    </location>
    <ligand>
        <name>ATP</name>
        <dbReference type="ChEBI" id="CHEBI:30616"/>
    </ligand>
</feature>
<feature type="binding site" evidence="1">
    <location>
        <position position="512"/>
    </location>
    <ligand>
        <name>ATP</name>
        <dbReference type="ChEBI" id="CHEBI:30616"/>
    </ligand>
</feature>
<feature type="binding site" evidence="1">
    <location>
        <position position="527"/>
    </location>
    <ligand>
        <name>ATP</name>
        <dbReference type="ChEBI" id="CHEBI:30616"/>
    </ligand>
</feature>
<feature type="binding site" evidence="1">
    <location>
        <position position="535"/>
    </location>
    <ligand>
        <name>CoA</name>
        <dbReference type="ChEBI" id="CHEBI:57287"/>
    </ligand>
</feature>
<feature type="binding site" evidence="1">
    <location>
        <position position="538"/>
    </location>
    <ligand>
        <name>ATP</name>
        <dbReference type="ChEBI" id="CHEBI:30616"/>
    </ligand>
</feature>
<feature type="binding site" evidence="1">
    <location>
        <position position="549"/>
    </location>
    <ligand>
        <name>Mg(2+)</name>
        <dbReference type="ChEBI" id="CHEBI:18420"/>
    </ligand>
</feature>
<feature type="binding site" evidence="1">
    <location>
        <position position="551"/>
    </location>
    <ligand>
        <name>Mg(2+)</name>
        <dbReference type="ChEBI" id="CHEBI:18420"/>
    </ligand>
</feature>
<feature type="binding site" evidence="1">
    <location>
        <position position="554"/>
    </location>
    <ligand>
        <name>Mg(2+)</name>
        <dbReference type="ChEBI" id="CHEBI:18420"/>
    </ligand>
</feature>
<feature type="modified residue" description="N6-acetyllysine" evidence="1">
    <location>
        <position position="621"/>
    </location>
</feature>
<dbReference type="EC" id="6.2.1.1" evidence="1"/>
<dbReference type="EMBL" id="AE006470">
    <property type="protein sequence ID" value="AAM72877.1"/>
    <property type="molecule type" value="Genomic_DNA"/>
</dbReference>
<dbReference type="RefSeq" id="NP_662535.2">
    <property type="nucleotide sequence ID" value="NC_002932.3"/>
</dbReference>
<dbReference type="RefSeq" id="WP_010933316.1">
    <property type="nucleotide sequence ID" value="NC_002932.3"/>
</dbReference>
<dbReference type="SMR" id="Q8KBY0"/>
<dbReference type="STRING" id="194439.CT1652"/>
<dbReference type="EnsemblBacteria" id="AAM72877">
    <property type="protein sequence ID" value="AAM72877"/>
    <property type="gene ID" value="CT1652"/>
</dbReference>
<dbReference type="KEGG" id="cte:CT1652"/>
<dbReference type="PATRIC" id="fig|194439.7.peg.1493"/>
<dbReference type="eggNOG" id="COG0365">
    <property type="taxonomic scope" value="Bacteria"/>
</dbReference>
<dbReference type="HOGENOM" id="CLU_000022_3_6_10"/>
<dbReference type="OrthoDB" id="9778383at2"/>
<dbReference type="Proteomes" id="UP000001007">
    <property type="component" value="Chromosome"/>
</dbReference>
<dbReference type="GO" id="GO:0005829">
    <property type="term" value="C:cytosol"/>
    <property type="evidence" value="ECO:0007669"/>
    <property type="project" value="TreeGrafter"/>
</dbReference>
<dbReference type="GO" id="GO:0003987">
    <property type="term" value="F:acetate-CoA ligase activity"/>
    <property type="evidence" value="ECO:0007669"/>
    <property type="project" value="UniProtKB-UniRule"/>
</dbReference>
<dbReference type="GO" id="GO:0016208">
    <property type="term" value="F:AMP binding"/>
    <property type="evidence" value="ECO:0007669"/>
    <property type="project" value="InterPro"/>
</dbReference>
<dbReference type="GO" id="GO:0005524">
    <property type="term" value="F:ATP binding"/>
    <property type="evidence" value="ECO:0007669"/>
    <property type="project" value="UniProtKB-KW"/>
</dbReference>
<dbReference type="GO" id="GO:0046872">
    <property type="term" value="F:metal ion binding"/>
    <property type="evidence" value="ECO:0007669"/>
    <property type="project" value="UniProtKB-KW"/>
</dbReference>
<dbReference type="GO" id="GO:0019427">
    <property type="term" value="P:acetyl-CoA biosynthetic process from acetate"/>
    <property type="evidence" value="ECO:0007669"/>
    <property type="project" value="InterPro"/>
</dbReference>
<dbReference type="CDD" id="cd05966">
    <property type="entry name" value="ACS"/>
    <property type="match status" value="1"/>
</dbReference>
<dbReference type="FunFam" id="3.40.50.12780:FF:000001">
    <property type="entry name" value="Acetyl-coenzyme A synthetase"/>
    <property type="match status" value="1"/>
</dbReference>
<dbReference type="Gene3D" id="3.30.300.30">
    <property type="match status" value="1"/>
</dbReference>
<dbReference type="Gene3D" id="3.40.50.12780">
    <property type="entry name" value="N-terminal domain of ligase-like"/>
    <property type="match status" value="1"/>
</dbReference>
<dbReference type="HAMAP" id="MF_01123">
    <property type="entry name" value="Ac_CoA_synth"/>
    <property type="match status" value="1"/>
</dbReference>
<dbReference type="InterPro" id="IPR011904">
    <property type="entry name" value="Ac_CoA_lig"/>
</dbReference>
<dbReference type="InterPro" id="IPR032387">
    <property type="entry name" value="ACAS_N"/>
</dbReference>
<dbReference type="InterPro" id="IPR025110">
    <property type="entry name" value="AMP-bd_C"/>
</dbReference>
<dbReference type="InterPro" id="IPR045851">
    <property type="entry name" value="AMP-bd_C_sf"/>
</dbReference>
<dbReference type="InterPro" id="IPR020845">
    <property type="entry name" value="AMP-binding_CS"/>
</dbReference>
<dbReference type="InterPro" id="IPR000873">
    <property type="entry name" value="AMP-dep_synth/lig_dom"/>
</dbReference>
<dbReference type="InterPro" id="IPR042099">
    <property type="entry name" value="ANL_N_sf"/>
</dbReference>
<dbReference type="NCBIfam" id="TIGR02188">
    <property type="entry name" value="Ac_CoA_lig_AcsA"/>
    <property type="match status" value="1"/>
</dbReference>
<dbReference type="NCBIfam" id="NF001208">
    <property type="entry name" value="PRK00174.1"/>
    <property type="match status" value="1"/>
</dbReference>
<dbReference type="PANTHER" id="PTHR24095">
    <property type="entry name" value="ACETYL-COENZYME A SYNTHETASE"/>
    <property type="match status" value="1"/>
</dbReference>
<dbReference type="PANTHER" id="PTHR24095:SF14">
    <property type="entry name" value="ACETYL-COENZYME A SYNTHETASE 1"/>
    <property type="match status" value="1"/>
</dbReference>
<dbReference type="Pfam" id="PF16177">
    <property type="entry name" value="ACAS_N"/>
    <property type="match status" value="1"/>
</dbReference>
<dbReference type="Pfam" id="PF00501">
    <property type="entry name" value="AMP-binding"/>
    <property type="match status" value="1"/>
</dbReference>
<dbReference type="Pfam" id="PF13193">
    <property type="entry name" value="AMP-binding_C"/>
    <property type="match status" value="1"/>
</dbReference>
<dbReference type="SUPFAM" id="SSF56801">
    <property type="entry name" value="Acetyl-CoA synthetase-like"/>
    <property type="match status" value="1"/>
</dbReference>
<dbReference type="PROSITE" id="PS00455">
    <property type="entry name" value="AMP_BINDING"/>
    <property type="match status" value="1"/>
</dbReference>
<gene>
    <name evidence="1" type="primary">acsA</name>
    <name type="synonym">acs</name>
    <name type="ordered locus">CT1652</name>
</gene>
<comment type="function">
    <text evidence="1">Catalyzes the conversion of acetate into acetyl-CoA (AcCoA), an essential intermediate at the junction of anabolic and catabolic pathways. AcsA undergoes a two-step reaction. In the first half reaction, AcsA combines acetate with ATP to form acetyl-adenylate (AcAMP) intermediate. In the second half reaction, it can then transfer the acetyl group from AcAMP to the sulfhydryl group of CoA, forming the product AcCoA.</text>
</comment>
<comment type="catalytic activity">
    <reaction evidence="1">
        <text>acetate + ATP + CoA = acetyl-CoA + AMP + diphosphate</text>
        <dbReference type="Rhea" id="RHEA:23176"/>
        <dbReference type="ChEBI" id="CHEBI:30089"/>
        <dbReference type="ChEBI" id="CHEBI:30616"/>
        <dbReference type="ChEBI" id="CHEBI:33019"/>
        <dbReference type="ChEBI" id="CHEBI:57287"/>
        <dbReference type="ChEBI" id="CHEBI:57288"/>
        <dbReference type="ChEBI" id="CHEBI:456215"/>
        <dbReference type="EC" id="6.2.1.1"/>
    </reaction>
</comment>
<comment type="cofactor">
    <cofactor evidence="1">
        <name>Mg(2+)</name>
        <dbReference type="ChEBI" id="CHEBI:18420"/>
    </cofactor>
</comment>
<comment type="PTM">
    <text evidence="1">Acetylated. Deacetylation by the SIR2-homolog deacetylase activates the enzyme.</text>
</comment>
<comment type="similarity">
    <text evidence="1">Belongs to the ATP-dependent AMP-binding enzyme family.</text>
</comment>
<proteinExistence type="inferred from homology"/>